<accession>B7NEU0</accession>
<dbReference type="EMBL" id="CU928163">
    <property type="protein sequence ID" value="CAR15291.1"/>
    <property type="molecule type" value="Genomic_DNA"/>
</dbReference>
<dbReference type="RefSeq" id="WP_001051798.1">
    <property type="nucleotide sequence ID" value="NC_011751.1"/>
</dbReference>
<dbReference type="RefSeq" id="YP_002414789.1">
    <property type="nucleotide sequence ID" value="NC_011751.1"/>
</dbReference>
<dbReference type="SMR" id="B7NEU0"/>
<dbReference type="STRING" id="585056.ECUMN_4150"/>
<dbReference type="GeneID" id="97607673"/>
<dbReference type="KEGG" id="eum:ECUMN_4150"/>
<dbReference type="PATRIC" id="fig|585056.7.peg.4325"/>
<dbReference type="HOGENOM" id="CLU_190949_1_1_6"/>
<dbReference type="PRO" id="PR:B7NEU0"/>
<dbReference type="Proteomes" id="UP000007097">
    <property type="component" value="Chromosome"/>
</dbReference>
<dbReference type="GO" id="GO:0022625">
    <property type="term" value="C:cytosolic large ribosomal subunit"/>
    <property type="evidence" value="ECO:0007669"/>
    <property type="project" value="TreeGrafter"/>
</dbReference>
<dbReference type="GO" id="GO:0003735">
    <property type="term" value="F:structural constituent of ribosome"/>
    <property type="evidence" value="ECO:0007669"/>
    <property type="project" value="InterPro"/>
</dbReference>
<dbReference type="GO" id="GO:0006412">
    <property type="term" value="P:translation"/>
    <property type="evidence" value="ECO:0007669"/>
    <property type="project" value="UniProtKB-UniRule"/>
</dbReference>
<dbReference type="FunFam" id="2.20.28.120:FF:000001">
    <property type="entry name" value="50S ribosomal protein L33"/>
    <property type="match status" value="1"/>
</dbReference>
<dbReference type="Gene3D" id="2.20.28.120">
    <property type="entry name" value="Ribosomal protein L33"/>
    <property type="match status" value="1"/>
</dbReference>
<dbReference type="HAMAP" id="MF_00294">
    <property type="entry name" value="Ribosomal_bL33"/>
    <property type="match status" value="1"/>
</dbReference>
<dbReference type="InterPro" id="IPR001705">
    <property type="entry name" value="Ribosomal_bL33"/>
</dbReference>
<dbReference type="InterPro" id="IPR018264">
    <property type="entry name" value="Ribosomal_bL33_CS"/>
</dbReference>
<dbReference type="InterPro" id="IPR038584">
    <property type="entry name" value="Ribosomal_bL33_sf"/>
</dbReference>
<dbReference type="InterPro" id="IPR011332">
    <property type="entry name" value="Ribosomal_zn-bd"/>
</dbReference>
<dbReference type="NCBIfam" id="NF001860">
    <property type="entry name" value="PRK00595.1"/>
    <property type="match status" value="1"/>
</dbReference>
<dbReference type="NCBIfam" id="TIGR01023">
    <property type="entry name" value="rpmG_bact"/>
    <property type="match status" value="1"/>
</dbReference>
<dbReference type="PANTHER" id="PTHR15238">
    <property type="entry name" value="54S RIBOSOMAL PROTEIN L39, MITOCHONDRIAL"/>
    <property type="match status" value="1"/>
</dbReference>
<dbReference type="PANTHER" id="PTHR15238:SF1">
    <property type="entry name" value="LARGE RIBOSOMAL SUBUNIT PROTEIN BL33M"/>
    <property type="match status" value="1"/>
</dbReference>
<dbReference type="Pfam" id="PF00471">
    <property type="entry name" value="Ribosomal_L33"/>
    <property type="match status" value="1"/>
</dbReference>
<dbReference type="SUPFAM" id="SSF57829">
    <property type="entry name" value="Zn-binding ribosomal proteins"/>
    <property type="match status" value="1"/>
</dbReference>
<dbReference type="PROSITE" id="PS00582">
    <property type="entry name" value="RIBOSOMAL_L33"/>
    <property type="match status" value="1"/>
</dbReference>
<gene>
    <name evidence="1" type="primary">rpmG</name>
    <name type="ordered locus">ECUMN_4150</name>
</gene>
<feature type="chain" id="PRO_1000119440" description="Large ribosomal subunit protein bL33">
    <location>
        <begin position="1"/>
        <end position="55"/>
    </location>
</feature>
<comment type="similarity">
    <text evidence="1">Belongs to the bacterial ribosomal protein bL33 family.</text>
</comment>
<evidence type="ECO:0000255" key="1">
    <source>
        <dbReference type="HAMAP-Rule" id="MF_00294"/>
    </source>
</evidence>
<evidence type="ECO:0000305" key="2"/>
<organism>
    <name type="scientific">Escherichia coli O17:K52:H18 (strain UMN026 / ExPEC)</name>
    <dbReference type="NCBI Taxonomy" id="585056"/>
    <lineage>
        <taxon>Bacteria</taxon>
        <taxon>Pseudomonadati</taxon>
        <taxon>Pseudomonadota</taxon>
        <taxon>Gammaproteobacteria</taxon>
        <taxon>Enterobacterales</taxon>
        <taxon>Enterobacteriaceae</taxon>
        <taxon>Escherichia</taxon>
    </lineage>
</organism>
<sequence length="55" mass="6372">MAKGIREKIKLVSSAGTGHFYTTTKNKRTKPEKLELKKFDPVVRQHVIYKEAKIK</sequence>
<proteinExistence type="inferred from homology"/>
<reference key="1">
    <citation type="journal article" date="2009" name="PLoS Genet.">
        <title>Organised genome dynamics in the Escherichia coli species results in highly diverse adaptive paths.</title>
        <authorList>
            <person name="Touchon M."/>
            <person name="Hoede C."/>
            <person name="Tenaillon O."/>
            <person name="Barbe V."/>
            <person name="Baeriswyl S."/>
            <person name="Bidet P."/>
            <person name="Bingen E."/>
            <person name="Bonacorsi S."/>
            <person name="Bouchier C."/>
            <person name="Bouvet O."/>
            <person name="Calteau A."/>
            <person name="Chiapello H."/>
            <person name="Clermont O."/>
            <person name="Cruveiller S."/>
            <person name="Danchin A."/>
            <person name="Diard M."/>
            <person name="Dossat C."/>
            <person name="Karoui M.E."/>
            <person name="Frapy E."/>
            <person name="Garry L."/>
            <person name="Ghigo J.M."/>
            <person name="Gilles A.M."/>
            <person name="Johnson J."/>
            <person name="Le Bouguenec C."/>
            <person name="Lescat M."/>
            <person name="Mangenot S."/>
            <person name="Martinez-Jehanne V."/>
            <person name="Matic I."/>
            <person name="Nassif X."/>
            <person name="Oztas S."/>
            <person name="Petit M.A."/>
            <person name="Pichon C."/>
            <person name="Rouy Z."/>
            <person name="Ruf C.S."/>
            <person name="Schneider D."/>
            <person name="Tourret J."/>
            <person name="Vacherie B."/>
            <person name="Vallenet D."/>
            <person name="Medigue C."/>
            <person name="Rocha E.P.C."/>
            <person name="Denamur E."/>
        </authorList>
    </citation>
    <scope>NUCLEOTIDE SEQUENCE [LARGE SCALE GENOMIC DNA]</scope>
    <source>
        <strain>UMN026 / ExPEC</strain>
    </source>
</reference>
<keyword id="KW-0687">Ribonucleoprotein</keyword>
<keyword id="KW-0689">Ribosomal protein</keyword>
<name>RL33_ECOLU</name>
<protein>
    <recommendedName>
        <fullName evidence="1">Large ribosomal subunit protein bL33</fullName>
    </recommendedName>
    <alternativeName>
        <fullName evidence="2">50S ribosomal protein L33</fullName>
    </alternativeName>
</protein>